<protein>
    <recommendedName>
        <fullName>Protein p15</fullName>
    </recommendedName>
</protein>
<dbReference type="EMBL" id="U55002">
    <property type="protein sequence ID" value="AAC97556.1"/>
    <property type="molecule type" value="Genomic_RNA"/>
</dbReference>
<dbReference type="RefSeq" id="NP_068347.1">
    <property type="nucleotide sequence ID" value="NC_002598.1"/>
</dbReference>
<dbReference type="KEGG" id="vg:912243"/>
<dbReference type="Proteomes" id="UP000001665">
    <property type="component" value="Segment"/>
</dbReference>
<keyword id="KW-1185">Reference proteome</keyword>
<sequence length="132" mass="15285">MELPLPEDVASVLYLTPLAAVREVNLWNGAPPPYSMLQLWARVDHAWAKDRVGRSYPTRKSYFKSTRLLPRTLYRQYQSYRDCQCLQETSPFTREVHHTCVQLDPLSPSTDGEHSPSSGSPAVLRQHREIWF</sequence>
<organism>
    <name type="scientific">Panicum mosaic virus (strain United States/Kansas 109S)</name>
    <name type="common">PMV</name>
    <dbReference type="NCBI Taxonomy" id="652599"/>
    <lineage>
        <taxon>Viruses</taxon>
        <taxon>Riboviria</taxon>
        <taxon>Orthornavirae</taxon>
        <taxon>Kitrinoviricota</taxon>
        <taxon>Tolucaviricetes</taxon>
        <taxon>Tolivirales</taxon>
        <taxon>Tombusviridae</taxon>
        <taxon>Procedovirinae</taxon>
        <taxon>Panicovirus</taxon>
        <taxon>Panicovirus panici</taxon>
    </lineage>
</organism>
<evidence type="ECO:0000269" key="1">
    <source>
    </source>
</evidence>
<reference key="1">
    <citation type="journal article" date="1998" name="Virology">
        <title>Nucleotide sequence and infectivity of a full-length cDNA clone of panicum mosaic virus.</title>
        <authorList>
            <person name="Turina M."/>
            <person name="Maruoka M."/>
            <person name="Monis J."/>
            <person name="Jackson A.O."/>
            <person name="Scholthof K.B."/>
        </authorList>
    </citation>
    <scope>NUCLEOTIDE SEQUENCE [GENOMIC RNA]</scope>
</reference>
<reference key="2">
    <citation type="journal article" date="2000" name="Virology">
        <title>A gene cluster encoded by panicum mosaic virus is associated with virus movement.</title>
        <authorList>
            <person name="Turina M."/>
            <person name="Desvoyes B."/>
            <person name="Scholthof K.B."/>
        </authorList>
    </citation>
    <scope>FUNCTION</scope>
</reference>
<comment type="function">
    <text evidence="1">May play a role in infectivity.</text>
</comment>
<gene>
    <name type="ORF">ORF4</name>
</gene>
<feature type="chain" id="PRO_0000399484" description="Protein p15">
    <location>
        <begin position="1"/>
        <end position="132"/>
    </location>
</feature>
<name>P15_PMVK</name>
<organismHost>
    <name type="scientific">Muhlenbergia</name>
    <dbReference type="NCBI Taxonomy" id="58090"/>
</organismHost>
<organismHost>
    <name type="scientific">Panicum virgatum</name>
    <name type="common">Blackwell switchgrass</name>
    <dbReference type="NCBI Taxonomy" id="38727"/>
</organismHost>
<proteinExistence type="predicted"/>
<accession>P89037</accession>